<proteinExistence type="evidence at protein level"/>
<reference key="1">
    <citation type="journal article" date="1990" name="DNA Cell Biol.">
        <title>Characterization of three abundant mRNAs from human ovarian granulosa cells.</title>
        <authorList>
            <person name="Rapp G."/>
            <person name="Freudenstein J."/>
            <person name="Klaudiny J."/>
            <person name="Mucha J."/>
            <person name="Wempe F."/>
            <person name="Zimmer M."/>
            <person name="Scheit K.H."/>
        </authorList>
    </citation>
    <scope>NUCLEOTIDE SEQUENCE [MRNA] (ISOFORM 1)</scope>
    <source>
        <tissue>Ovary</tissue>
    </source>
</reference>
<reference key="2">
    <citation type="journal article" date="2000" name="J. Biol. Chem.">
        <title>NADE, a p75NTR-associated cell death executor, is involved in signal transduction mediated by the common neurotrophin receptor p75NTR.</title>
        <authorList>
            <person name="Mukai J."/>
            <person name="Hachiya T."/>
            <person name="Shoji-Hoshino S."/>
            <person name="Kimura M.T."/>
            <person name="Nadano D."/>
            <person name="Suvanto P."/>
            <person name="Hanaoka T."/>
            <person name="Li Y."/>
            <person name="Irie S."/>
            <person name="Greene L.A."/>
            <person name="Sato T.-A."/>
        </authorList>
    </citation>
    <scope>NUCLEOTIDE SEQUENCE [MRNA] (ISOFORM 1)</scope>
    <scope>CHARACTERIZATION</scope>
</reference>
<reference key="3">
    <citation type="journal article" date="2005" name="Gene">
        <title>Characterization of the Bex gene family in humans, mice, and rats.</title>
        <authorList>
            <person name="Alvarez E."/>
            <person name="Zhou W."/>
            <person name="Witta S.E."/>
            <person name="Freed C.R."/>
        </authorList>
    </citation>
    <scope>NUCLEOTIDE SEQUENCE [MRNA] (ISOFORM 1)</scope>
    <scope>TISSUE SPECIFICITY</scope>
</reference>
<reference key="4">
    <citation type="journal article" date="2004" name="Nat. Genet.">
        <title>Complete sequencing and characterization of 21,243 full-length human cDNAs.</title>
        <authorList>
            <person name="Ota T."/>
            <person name="Suzuki Y."/>
            <person name="Nishikawa T."/>
            <person name="Otsuki T."/>
            <person name="Sugiyama T."/>
            <person name="Irie R."/>
            <person name="Wakamatsu A."/>
            <person name="Hayashi K."/>
            <person name="Sato H."/>
            <person name="Nagai K."/>
            <person name="Kimura K."/>
            <person name="Makita H."/>
            <person name="Sekine M."/>
            <person name="Obayashi M."/>
            <person name="Nishi T."/>
            <person name="Shibahara T."/>
            <person name="Tanaka T."/>
            <person name="Ishii S."/>
            <person name="Yamamoto J."/>
            <person name="Saito K."/>
            <person name="Kawai Y."/>
            <person name="Isono Y."/>
            <person name="Nakamura Y."/>
            <person name="Nagahari K."/>
            <person name="Murakami K."/>
            <person name="Yasuda T."/>
            <person name="Iwayanagi T."/>
            <person name="Wagatsuma M."/>
            <person name="Shiratori A."/>
            <person name="Sudo H."/>
            <person name="Hosoiri T."/>
            <person name="Kaku Y."/>
            <person name="Kodaira H."/>
            <person name="Kondo H."/>
            <person name="Sugawara M."/>
            <person name="Takahashi M."/>
            <person name="Kanda K."/>
            <person name="Yokoi T."/>
            <person name="Furuya T."/>
            <person name="Kikkawa E."/>
            <person name="Omura Y."/>
            <person name="Abe K."/>
            <person name="Kamihara K."/>
            <person name="Katsuta N."/>
            <person name="Sato K."/>
            <person name="Tanikawa M."/>
            <person name="Yamazaki M."/>
            <person name="Ninomiya K."/>
            <person name="Ishibashi T."/>
            <person name="Yamashita H."/>
            <person name="Murakawa K."/>
            <person name="Fujimori K."/>
            <person name="Tanai H."/>
            <person name="Kimata M."/>
            <person name="Watanabe M."/>
            <person name="Hiraoka S."/>
            <person name="Chiba Y."/>
            <person name="Ishida S."/>
            <person name="Ono Y."/>
            <person name="Takiguchi S."/>
            <person name="Watanabe S."/>
            <person name="Yosida M."/>
            <person name="Hotuta T."/>
            <person name="Kusano J."/>
            <person name="Kanehori K."/>
            <person name="Takahashi-Fujii A."/>
            <person name="Hara H."/>
            <person name="Tanase T.-O."/>
            <person name="Nomura Y."/>
            <person name="Togiya S."/>
            <person name="Komai F."/>
            <person name="Hara R."/>
            <person name="Takeuchi K."/>
            <person name="Arita M."/>
            <person name="Imose N."/>
            <person name="Musashino K."/>
            <person name="Yuuki H."/>
            <person name="Oshima A."/>
            <person name="Sasaki N."/>
            <person name="Aotsuka S."/>
            <person name="Yoshikawa Y."/>
            <person name="Matsunawa H."/>
            <person name="Ichihara T."/>
            <person name="Shiohata N."/>
            <person name="Sano S."/>
            <person name="Moriya S."/>
            <person name="Momiyama H."/>
            <person name="Satoh N."/>
            <person name="Takami S."/>
            <person name="Terashima Y."/>
            <person name="Suzuki O."/>
            <person name="Nakagawa S."/>
            <person name="Senoh A."/>
            <person name="Mizoguchi H."/>
            <person name="Goto Y."/>
            <person name="Shimizu F."/>
            <person name="Wakebe H."/>
            <person name="Hishigaki H."/>
            <person name="Watanabe T."/>
            <person name="Sugiyama A."/>
            <person name="Takemoto M."/>
            <person name="Kawakami B."/>
            <person name="Yamazaki M."/>
            <person name="Watanabe K."/>
            <person name="Kumagai A."/>
            <person name="Itakura S."/>
            <person name="Fukuzumi Y."/>
            <person name="Fujimori Y."/>
            <person name="Komiyama M."/>
            <person name="Tashiro H."/>
            <person name="Tanigami A."/>
            <person name="Fujiwara T."/>
            <person name="Ono T."/>
            <person name="Yamada K."/>
            <person name="Fujii Y."/>
            <person name="Ozaki K."/>
            <person name="Hirao M."/>
            <person name="Ohmori Y."/>
            <person name="Kawabata A."/>
            <person name="Hikiji T."/>
            <person name="Kobatake N."/>
            <person name="Inagaki H."/>
            <person name="Ikema Y."/>
            <person name="Okamoto S."/>
            <person name="Okitani R."/>
            <person name="Kawakami T."/>
            <person name="Noguchi S."/>
            <person name="Itoh T."/>
            <person name="Shigeta K."/>
            <person name="Senba T."/>
            <person name="Matsumura K."/>
            <person name="Nakajima Y."/>
            <person name="Mizuno T."/>
            <person name="Morinaga M."/>
            <person name="Sasaki M."/>
            <person name="Togashi T."/>
            <person name="Oyama M."/>
            <person name="Hata H."/>
            <person name="Watanabe M."/>
            <person name="Komatsu T."/>
            <person name="Mizushima-Sugano J."/>
            <person name="Satoh T."/>
            <person name="Shirai Y."/>
            <person name="Takahashi Y."/>
            <person name="Nakagawa K."/>
            <person name="Okumura K."/>
            <person name="Nagase T."/>
            <person name="Nomura N."/>
            <person name="Kikuchi H."/>
            <person name="Masuho Y."/>
            <person name="Yamashita R."/>
            <person name="Nakai K."/>
            <person name="Yada T."/>
            <person name="Nakamura Y."/>
            <person name="Ohara O."/>
            <person name="Isogai T."/>
            <person name="Sugano S."/>
        </authorList>
    </citation>
    <scope>NUCLEOTIDE SEQUENCE [LARGE SCALE MRNA] (ISOFORM 1)</scope>
    <source>
        <tissue>Cerebellum</tissue>
    </source>
</reference>
<reference key="5">
    <citation type="journal article" date="2007" name="Mol. Vis.">
        <title>A comparative gene expression profile of the whole eye from human, mouse, and guinea pig.</title>
        <authorList>
            <person name="Zhou X."/>
            <person name="Wang W."/>
            <person name="Lu F."/>
            <person name="Hu S."/>
            <person name="Jiang L."/>
            <person name="Yan D."/>
            <person name="Zhang X."/>
            <person name="Yu X."/>
            <person name="Yu J."/>
            <person name="Qu J."/>
        </authorList>
    </citation>
    <scope>NUCLEOTIDE SEQUENCE [LARGE SCALE MRNA] (ISOFORM 2)</scope>
    <source>
        <tissue>Eye</tissue>
    </source>
</reference>
<reference key="6">
    <citation type="journal article" date="2005" name="Nature">
        <title>The DNA sequence of the human X chromosome.</title>
        <authorList>
            <person name="Ross M.T."/>
            <person name="Grafham D.V."/>
            <person name="Coffey A.J."/>
            <person name="Scherer S."/>
            <person name="McLay K."/>
            <person name="Muzny D."/>
            <person name="Platzer M."/>
            <person name="Howell G.R."/>
            <person name="Burrows C."/>
            <person name="Bird C.P."/>
            <person name="Frankish A."/>
            <person name="Lovell F.L."/>
            <person name="Howe K.L."/>
            <person name="Ashurst J.L."/>
            <person name="Fulton R.S."/>
            <person name="Sudbrak R."/>
            <person name="Wen G."/>
            <person name="Jones M.C."/>
            <person name="Hurles M.E."/>
            <person name="Andrews T.D."/>
            <person name="Scott C.E."/>
            <person name="Searle S."/>
            <person name="Ramser J."/>
            <person name="Whittaker A."/>
            <person name="Deadman R."/>
            <person name="Carter N.P."/>
            <person name="Hunt S.E."/>
            <person name="Chen R."/>
            <person name="Cree A."/>
            <person name="Gunaratne P."/>
            <person name="Havlak P."/>
            <person name="Hodgson A."/>
            <person name="Metzker M.L."/>
            <person name="Richards S."/>
            <person name="Scott G."/>
            <person name="Steffen D."/>
            <person name="Sodergren E."/>
            <person name="Wheeler D.A."/>
            <person name="Worley K.C."/>
            <person name="Ainscough R."/>
            <person name="Ambrose K.D."/>
            <person name="Ansari-Lari M.A."/>
            <person name="Aradhya S."/>
            <person name="Ashwell R.I."/>
            <person name="Babbage A.K."/>
            <person name="Bagguley C.L."/>
            <person name="Ballabio A."/>
            <person name="Banerjee R."/>
            <person name="Barker G.E."/>
            <person name="Barlow K.F."/>
            <person name="Barrett I.P."/>
            <person name="Bates K.N."/>
            <person name="Beare D.M."/>
            <person name="Beasley H."/>
            <person name="Beasley O."/>
            <person name="Beck A."/>
            <person name="Bethel G."/>
            <person name="Blechschmidt K."/>
            <person name="Brady N."/>
            <person name="Bray-Allen S."/>
            <person name="Bridgeman A.M."/>
            <person name="Brown A.J."/>
            <person name="Brown M.J."/>
            <person name="Bonnin D."/>
            <person name="Bruford E.A."/>
            <person name="Buhay C."/>
            <person name="Burch P."/>
            <person name="Burford D."/>
            <person name="Burgess J."/>
            <person name="Burrill W."/>
            <person name="Burton J."/>
            <person name="Bye J.M."/>
            <person name="Carder C."/>
            <person name="Carrel L."/>
            <person name="Chako J."/>
            <person name="Chapman J.C."/>
            <person name="Chavez D."/>
            <person name="Chen E."/>
            <person name="Chen G."/>
            <person name="Chen Y."/>
            <person name="Chen Z."/>
            <person name="Chinault C."/>
            <person name="Ciccodicola A."/>
            <person name="Clark S.Y."/>
            <person name="Clarke G."/>
            <person name="Clee C.M."/>
            <person name="Clegg S."/>
            <person name="Clerc-Blankenburg K."/>
            <person name="Clifford K."/>
            <person name="Cobley V."/>
            <person name="Cole C.G."/>
            <person name="Conquer J.S."/>
            <person name="Corby N."/>
            <person name="Connor R.E."/>
            <person name="David R."/>
            <person name="Davies J."/>
            <person name="Davis C."/>
            <person name="Davis J."/>
            <person name="Delgado O."/>
            <person name="Deshazo D."/>
            <person name="Dhami P."/>
            <person name="Ding Y."/>
            <person name="Dinh H."/>
            <person name="Dodsworth S."/>
            <person name="Draper H."/>
            <person name="Dugan-Rocha S."/>
            <person name="Dunham A."/>
            <person name="Dunn M."/>
            <person name="Durbin K.J."/>
            <person name="Dutta I."/>
            <person name="Eades T."/>
            <person name="Ellwood M."/>
            <person name="Emery-Cohen A."/>
            <person name="Errington H."/>
            <person name="Evans K.L."/>
            <person name="Faulkner L."/>
            <person name="Francis F."/>
            <person name="Frankland J."/>
            <person name="Fraser A.E."/>
            <person name="Galgoczy P."/>
            <person name="Gilbert J."/>
            <person name="Gill R."/>
            <person name="Gloeckner G."/>
            <person name="Gregory S.G."/>
            <person name="Gribble S."/>
            <person name="Griffiths C."/>
            <person name="Grocock R."/>
            <person name="Gu Y."/>
            <person name="Gwilliam R."/>
            <person name="Hamilton C."/>
            <person name="Hart E.A."/>
            <person name="Hawes A."/>
            <person name="Heath P.D."/>
            <person name="Heitmann K."/>
            <person name="Hennig S."/>
            <person name="Hernandez J."/>
            <person name="Hinzmann B."/>
            <person name="Ho S."/>
            <person name="Hoffs M."/>
            <person name="Howden P.J."/>
            <person name="Huckle E.J."/>
            <person name="Hume J."/>
            <person name="Hunt P.J."/>
            <person name="Hunt A.R."/>
            <person name="Isherwood J."/>
            <person name="Jacob L."/>
            <person name="Johnson D."/>
            <person name="Jones S."/>
            <person name="de Jong P.J."/>
            <person name="Joseph S.S."/>
            <person name="Keenan S."/>
            <person name="Kelly S."/>
            <person name="Kershaw J.K."/>
            <person name="Khan Z."/>
            <person name="Kioschis P."/>
            <person name="Klages S."/>
            <person name="Knights A.J."/>
            <person name="Kosiura A."/>
            <person name="Kovar-Smith C."/>
            <person name="Laird G.K."/>
            <person name="Langford C."/>
            <person name="Lawlor S."/>
            <person name="Leversha M."/>
            <person name="Lewis L."/>
            <person name="Liu W."/>
            <person name="Lloyd C."/>
            <person name="Lloyd D.M."/>
            <person name="Loulseged H."/>
            <person name="Loveland J.E."/>
            <person name="Lovell J.D."/>
            <person name="Lozado R."/>
            <person name="Lu J."/>
            <person name="Lyne R."/>
            <person name="Ma J."/>
            <person name="Maheshwari M."/>
            <person name="Matthews L.H."/>
            <person name="McDowall J."/>
            <person name="McLaren S."/>
            <person name="McMurray A."/>
            <person name="Meidl P."/>
            <person name="Meitinger T."/>
            <person name="Milne S."/>
            <person name="Miner G."/>
            <person name="Mistry S.L."/>
            <person name="Morgan M."/>
            <person name="Morris S."/>
            <person name="Mueller I."/>
            <person name="Mullikin J.C."/>
            <person name="Nguyen N."/>
            <person name="Nordsiek G."/>
            <person name="Nyakatura G."/>
            <person name="O'dell C.N."/>
            <person name="Okwuonu G."/>
            <person name="Palmer S."/>
            <person name="Pandian R."/>
            <person name="Parker D."/>
            <person name="Parrish J."/>
            <person name="Pasternak S."/>
            <person name="Patel D."/>
            <person name="Pearce A.V."/>
            <person name="Pearson D.M."/>
            <person name="Pelan S.E."/>
            <person name="Perez L."/>
            <person name="Porter K.M."/>
            <person name="Ramsey Y."/>
            <person name="Reichwald K."/>
            <person name="Rhodes S."/>
            <person name="Ridler K.A."/>
            <person name="Schlessinger D."/>
            <person name="Schueler M.G."/>
            <person name="Sehra H.K."/>
            <person name="Shaw-Smith C."/>
            <person name="Shen H."/>
            <person name="Sheridan E.M."/>
            <person name="Shownkeen R."/>
            <person name="Skuce C.D."/>
            <person name="Smith M.L."/>
            <person name="Sotheran E.C."/>
            <person name="Steingruber H.E."/>
            <person name="Steward C.A."/>
            <person name="Storey R."/>
            <person name="Swann R.M."/>
            <person name="Swarbreck D."/>
            <person name="Tabor P.E."/>
            <person name="Taudien S."/>
            <person name="Taylor T."/>
            <person name="Teague B."/>
            <person name="Thomas K."/>
            <person name="Thorpe A."/>
            <person name="Timms K."/>
            <person name="Tracey A."/>
            <person name="Trevanion S."/>
            <person name="Tromans A.C."/>
            <person name="d'Urso M."/>
            <person name="Verduzco D."/>
            <person name="Villasana D."/>
            <person name="Waldron L."/>
            <person name="Wall M."/>
            <person name="Wang Q."/>
            <person name="Warren J."/>
            <person name="Warry G.L."/>
            <person name="Wei X."/>
            <person name="West A."/>
            <person name="Whitehead S.L."/>
            <person name="Whiteley M.N."/>
            <person name="Wilkinson J.E."/>
            <person name="Willey D.L."/>
            <person name="Williams G."/>
            <person name="Williams L."/>
            <person name="Williamson A."/>
            <person name="Williamson H."/>
            <person name="Wilming L."/>
            <person name="Woodmansey R.L."/>
            <person name="Wray P.W."/>
            <person name="Yen J."/>
            <person name="Zhang J."/>
            <person name="Zhou J."/>
            <person name="Zoghbi H."/>
            <person name="Zorilla S."/>
            <person name="Buck D."/>
            <person name="Reinhardt R."/>
            <person name="Poustka A."/>
            <person name="Rosenthal A."/>
            <person name="Lehrach H."/>
            <person name="Meindl A."/>
            <person name="Minx P.J."/>
            <person name="Hillier L.W."/>
            <person name="Willard H.F."/>
            <person name="Wilson R.K."/>
            <person name="Waterston R.H."/>
            <person name="Rice C.M."/>
            <person name="Vaudin M."/>
            <person name="Coulson A."/>
            <person name="Nelson D.L."/>
            <person name="Weinstock G."/>
            <person name="Sulston J.E."/>
            <person name="Durbin R.M."/>
            <person name="Hubbard T."/>
            <person name="Gibbs R.A."/>
            <person name="Beck S."/>
            <person name="Rogers J."/>
            <person name="Bentley D.R."/>
        </authorList>
    </citation>
    <scope>NUCLEOTIDE SEQUENCE [LARGE SCALE GENOMIC DNA]</scope>
</reference>
<reference key="7">
    <citation type="submission" date="2005-09" db="EMBL/GenBank/DDBJ databases">
        <authorList>
            <person name="Mural R.J."/>
            <person name="Istrail S."/>
            <person name="Sutton G.G."/>
            <person name="Florea L."/>
            <person name="Halpern A.L."/>
            <person name="Mobarry C.M."/>
            <person name="Lippert R."/>
            <person name="Walenz B."/>
            <person name="Shatkay H."/>
            <person name="Dew I."/>
            <person name="Miller J.R."/>
            <person name="Flanigan M.J."/>
            <person name="Edwards N.J."/>
            <person name="Bolanos R."/>
            <person name="Fasulo D."/>
            <person name="Halldorsson B.V."/>
            <person name="Hannenhalli S."/>
            <person name="Turner R."/>
            <person name="Yooseph S."/>
            <person name="Lu F."/>
            <person name="Nusskern D.R."/>
            <person name="Shue B.C."/>
            <person name="Zheng X.H."/>
            <person name="Zhong F."/>
            <person name="Delcher A.L."/>
            <person name="Huson D.H."/>
            <person name="Kravitz S.A."/>
            <person name="Mouchard L."/>
            <person name="Reinert K."/>
            <person name="Remington K.A."/>
            <person name="Clark A.G."/>
            <person name="Waterman M.S."/>
            <person name="Eichler E.E."/>
            <person name="Adams M.D."/>
            <person name="Hunkapiller M.W."/>
            <person name="Myers E.W."/>
            <person name="Venter J.C."/>
        </authorList>
    </citation>
    <scope>NUCLEOTIDE SEQUENCE [LARGE SCALE GENOMIC DNA]</scope>
</reference>
<reference key="8">
    <citation type="journal article" date="2004" name="Genome Res.">
        <title>The status, quality, and expansion of the NIH full-length cDNA project: the Mammalian Gene Collection (MGC).</title>
        <authorList>
            <consortium name="The MGC Project Team"/>
        </authorList>
    </citation>
    <scope>NUCLEOTIDE SEQUENCE [LARGE SCALE MRNA] (ISOFORM 1)</scope>
    <source>
        <tissue>Eye</tissue>
    </source>
</reference>
<feature type="chain" id="PRO_0000096688" description="Protein BEX3">
    <location>
        <begin position="1"/>
        <end position="111"/>
    </location>
</feature>
<feature type="region of interest" description="Disordered" evidence="2">
    <location>
        <begin position="1"/>
        <end position="63"/>
    </location>
</feature>
<feature type="region of interest" description="Interaction with 14-3-3 epsilon" evidence="1">
    <location>
        <begin position="68"/>
        <end position="111"/>
    </location>
</feature>
<feature type="region of interest" description="Interaction with p75NTR/NGFR" evidence="1">
    <location>
        <begin position="68"/>
        <end position="93"/>
    </location>
</feature>
<feature type="region of interest" description="His cluster" evidence="1">
    <location>
        <begin position="100"/>
        <end position="104"/>
    </location>
</feature>
<feature type="short sequence motif" description="Nuclear export signal" evidence="1">
    <location>
        <begin position="77"/>
        <end position="87"/>
    </location>
</feature>
<feature type="binding site" evidence="1">
    <location>
        <position position="108"/>
    </location>
    <ligand>
        <name>Zn(2+)</name>
        <dbReference type="ChEBI" id="CHEBI:29105"/>
        <note>ligand shared with FEM1B</note>
    </ligand>
</feature>
<feature type="splice variant" id="VSP_046343" description="In isoform 2." evidence="4">
    <location>
        <begin position="1"/>
        <end position="10"/>
    </location>
</feature>
<sequence>MANIHQENEEMEQPMQNGEEDRPLGGGEGHQPAGNRRGQARRLAPNFRWAIPNRQINDGMGGDGDDMEIFMEEMREIRRKLRELQLRNCLRILMGELSNHHDHHDEFCLMP</sequence>
<keyword id="KW-0025">Alternative splicing</keyword>
<keyword id="KW-0053">Apoptosis</keyword>
<keyword id="KW-0963">Cytoplasm</keyword>
<keyword id="KW-0479">Metal-binding</keyword>
<keyword id="KW-0539">Nucleus</keyword>
<keyword id="KW-1267">Proteomics identification</keyword>
<keyword id="KW-1185">Reference proteome</keyword>
<keyword id="KW-0832">Ubl conjugation</keyword>
<keyword id="KW-0862">Zinc</keyword>
<comment type="function">
    <text evidence="1">May be a signaling adapter molecule involved in NGFR/p75NTR-mediated apoptosis induced by NGF. Plays a role in zinc-triggered neuronal death. In absence of reductive stress, acts as a pseudosubstrate for the CRL2(FEM1B) complex: associates with FEM1B via zinc, thereby preventing association between FEM1B and its substrates.</text>
</comment>
<comment type="subunit">
    <text evidence="1">Self-associates. Binds to the DEATH domain of p75NTR/NGFR. Interacts with 14-3-3 epsilon (YWHAE). Interacts with DIABLO/SMAC.</text>
</comment>
<comment type="interaction">
    <interactant intactId="EBI-741753">
        <id>Q00994</id>
    </interactant>
    <interactant intactId="EBI-741753">
        <id>Q00994</id>
        <label>BEX3</label>
    </interactant>
    <organismsDiffer>false</organismsDiffer>
    <experiments>4</experiments>
</comment>
<comment type="interaction">
    <interactant intactId="EBI-741753">
        <id>Q00994</id>
    </interactant>
    <interactant intactId="EBI-10229433">
        <id>Q13515</id>
        <label>BFSP2</label>
    </interactant>
    <organismsDiffer>false</organismsDiffer>
    <experiments>3</experiments>
</comment>
<comment type="interaction">
    <interactant intactId="EBI-741753">
        <id>Q00994</id>
    </interactant>
    <interactant intactId="EBI-11524851">
        <id>Q8NA61-2</id>
        <label>CBY2</label>
    </interactant>
    <organismsDiffer>false</organismsDiffer>
    <experiments>3</experiments>
</comment>
<comment type="interaction">
    <interactant intactId="EBI-741753">
        <id>Q00994</id>
    </interactant>
    <interactant intactId="EBI-744311">
        <id>Q8IYX3</id>
        <label>CCDC116</label>
    </interactant>
    <organismsDiffer>false</organismsDiffer>
    <experiments>4</experiments>
</comment>
<comment type="interaction">
    <interactant intactId="EBI-741753">
        <id>Q00994</id>
    </interactant>
    <interactant intactId="EBI-748128">
        <id>Q8WYA6</id>
        <label>CTNNBL1</label>
    </interactant>
    <organismsDiffer>false</organismsDiffer>
    <experiments>3</experiments>
</comment>
<comment type="interaction">
    <interactant intactId="EBI-741753">
        <id>Q00994</id>
    </interactant>
    <interactant intactId="EBI-10976677">
        <id>G5E9A7</id>
        <label>DMWD</label>
    </interactant>
    <organismsDiffer>false</organismsDiffer>
    <experiments>3</experiments>
</comment>
<comment type="interaction">
    <interactant intactId="EBI-741753">
        <id>Q00994</id>
    </interactant>
    <interactant intactId="EBI-21603100">
        <id>P26378-2</id>
        <label>ELAVL4</label>
    </interactant>
    <organismsDiffer>false</organismsDiffer>
    <experiments>3</experiments>
</comment>
<comment type="interaction">
    <interactant intactId="EBI-741753">
        <id>Q00994</id>
    </interactant>
    <interactant intactId="EBI-744586">
        <id>Q9Y6C2</id>
        <label>EMILIN1</label>
    </interactant>
    <organismsDiffer>false</organismsDiffer>
    <experiments>3</experiments>
</comment>
<comment type="interaction">
    <interactant intactId="EBI-741753">
        <id>Q00994</id>
    </interactant>
    <interactant intactId="EBI-11748557">
        <id>Q9Y6C2-2</id>
        <label>EMILIN1</label>
    </interactant>
    <organismsDiffer>false</organismsDiffer>
    <experiments>6</experiments>
</comment>
<comment type="interaction">
    <interactant intactId="EBI-741753">
        <id>Q00994</id>
    </interactant>
    <interactant intactId="EBI-744099">
        <id>Q9H0I2</id>
        <label>ENKD1</label>
    </interactant>
    <organismsDiffer>false</organismsDiffer>
    <experiments>3</experiments>
</comment>
<comment type="interaction">
    <interactant intactId="EBI-741753">
        <id>Q00994</id>
    </interactant>
    <interactant intactId="EBI-348399">
        <id>P22607</id>
        <label>FGFR3</label>
    </interactant>
    <organismsDiffer>false</organismsDiffer>
    <experiments>3</experiments>
</comment>
<comment type="interaction">
    <interactant intactId="EBI-741753">
        <id>Q00994</id>
    </interactant>
    <interactant intactId="EBI-5661036">
        <id>A1L4K1</id>
        <label>FSD2</label>
    </interactant>
    <organismsDiffer>false</organismsDiffer>
    <experiments>6</experiments>
</comment>
<comment type="interaction">
    <interactant intactId="EBI-741753">
        <id>Q00994</id>
    </interactant>
    <interactant intactId="EBI-1955541">
        <id>Q53GS7</id>
        <label>GLE1</label>
    </interactant>
    <organismsDiffer>false</organismsDiffer>
    <experiments>3</experiments>
</comment>
<comment type="interaction">
    <interactant intactId="EBI-741753">
        <id>Q00994</id>
    </interactant>
    <interactant intactId="EBI-10181276">
        <id>Q0D2H9</id>
        <label>GOLGA8DP</label>
    </interactant>
    <organismsDiffer>false</organismsDiffer>
    <experiments>3</experiments>
</comment>
<comment type="interaction">
    <interactant intactId="EBI-741753">
        <id>Q00994</id>
    </interactant>
    <interactant intactId="EBI-10181260">
        <id>Q08AF8</id>
        <label>GOLGA8G</label>
    </interactant>
    <organismsDiffer>false</organismsDiffer>
    <experiments>3</experiments>
</comment>
<comment type="interaction">
    <interactant intactId="EBI-741753">
        <id>Q00994</id>
    </interactant>
    <interactant intactId="EBI-350145">
        <id>P01112</id>
        <label>HRAS</label>
    </interactant>
    <organismsDiffer>false</organismsDiffer>
    <experiments>3</experiments>
</comment>
<comment type="interaction">
    <interactant intactId="EBI-741753">
        <id>Q00994</id>
    </interactant>
    <interactant intactId="EBI-466029">
        <id>P42858</id>
        <label>HTT</label>
    </interactant>
    <organismsDiffer>false</organismsDiffer>
    <experiments>6</experiments>
</comment>
<comment type="interaction">
    <interactant intactId="EBI-741753">
        <id>Q00994</id>
    </interactant>
    <interactant intactId="EBI-2866661">
        <id>Q9UNL4</id>
        <label>ING4</label>
    </interactant>
    <organismsDiffer>false</organismsDiffer>
    <experiments>3</experiments>
</comment>
<comment type="interaction">
    <interactant intactId="EBI-741753">
        <id>Q00994</id>
    </interactant>
    <interactant intactId="EBI-488533">
        <id>Q8WYH8</id>
        <label>ING5</label>
    </interactant>
    <organismsDiffer>false</organismsDiffer>
    <experiments>3</experiments>
</comment>
<comment type="interaction">
    <interactant intactId="EBI-741753">
        <id>Q00994</id>
    </interactant>
    <interactant intactId="EBI-1047093">
        <id>O76011</id>
        <label>KRT34</label>
    </interactant>
    <organismsDiffer>false</organismsDiffer>
    <experiments>3</experiments>
</comment>
<comment type="interaction">
    <interactant intactId="EBI-741753">
        <id>Q00994</id>
    </interactant>
    <interactant intactId="EBI-11987923">
        <id>P59942</id>
        <label>MCCD1</label>
    </interactant>
    <organismsDiffer>false</organismsDiffer>
    <experiments>3</experiments>
</comment>
<comment type="interaction">
    <interactant intactId="EBI-741753">
        <id>Q00994</id>
    </interactant>
    <interactant intactId="EBI-724076">
        <id>Q99750</id>
        <label>MDFI</label>
    </interactant>
    <organismsDiffer>false</organismsDiffer>
    <experiments>3</experiments>
</comment>
<comment type="interaction">
    <interactant intactId="EBI-741753">
        <id>Q00994</id>
    </interactant>
    <interactant intactId="EBI-10172876">
        <id>Q7Z6G3-2</id>
        <label>NECAB2</label>
    </interactant>
    <organismsDiffer>false</organismsDiffer>
    <experiments>6</experiments>
</comment>
<comment type="interaction">
    <interactant intactId="EBI-741753">
        <id>Q00994</id>
    </interactant>
    <interactant intactId="EBI-743686">
        <id>P23297</id>
        <label>S100A1</label>
    </interactant>
    <organismsDiffer>false</organismsDiffer>
    <experiments>3</experiments>
</comment>
<comment type="interaction">
    <interactant intactId="EBI-741753">
        <id>Q00994</id>
    </interactant>
    <interactant intactId="EBI-12198403">
        <id>Q8WXG8</id>
        <label>S100Z</label>
    </interactant>
    <organismsDiffer>false</organismsDiffer>
    <experiments>5</experiments>
</comment>
<comment type="interaction">
    <interactant intactId="EBI-741753">
        <id>Q00994</id>
    </interactant>
    <interactant intactId="EBI-358489">
        <id>Q96GM5</id>
        <label>SMARCD1</label>
    </interactant>
    <organismsDiffer>false</organismsDiffer>
    <experiments>3</experiments>
</comment>
<comment type="interaction">
    <interactant intactId="EBI-741753">
        <id>Q00994</id>
    </interactant>
    <interactant intactId="EBI-5235340">
        <id>Q7Z699</id>
        <label>SPRED1</label>
    </interactant>
    <organismsDiffer>false</organismsDiffer>
    <experiments>3</experiments>
</comment>
<comment type="interaction">
    <interactant intactId="EBI-741753">
        <id>Q00994</id>
    </interactant>
    <interactant intactId="EBI-2554984">
        <id>Q9Y6A5</id>
        <label>TACC3</label>
    </interactant>
    <organismsDiffer>false</organismsDiffer>
    <experiments>3</experiments>
</comment>
<comment type="interaction">
    <interactant intactId="EBI-741753">
        <id>Q00994</id>
    </interactant>
    <interactant intactId="EBI-1047085">
        <id>Q92574</id>
        <label>TSC1</label>
    </interactant>
    <organismsDiffer>false</organismsDiffer>
    <experiments>5</experiments>
</comment>
<comment type="interaction">
    <interactant intactId="EBI-741753">
        <id>Q00994</id>
    </interactant>
    <interactant intactId="EBI-21353855">
        <id>Q99598</id>
        <label>TSNAX</label>
    </interactant>
    <organismsDiffer>false</organismsDiffer>
    <experiments>3</experiments>
</comment>
<comment type="interaction">
    <interactant intactId="EBI-741753">
        <id>Q00994</id>
    </interactant>
    <interactant intactId="EBI-739895">
        <id>Q8N6Y0</id>
        <label>USHBP1</label>
    </interactant>
    <organismsDiffer>false</organismsDiffer>
    <experiments>6</experiments>
</comment>
<comment type="interaction">
    <interactant intactId="EBI-741753">
        <id>Q00994</id>
    </interactant>
    <interactant intactId="EBI-740727">
        <id>Q8TAU3</id>
        <label>ZNF417</label>
    </interactant>
    <organismsDiffer>false</organismsDiffer>
    <experiments>3</experiments>
</comment>
<comment type="subcellular location">
    <subcellularLocation>
        <location evidence="1">Nucleus</location>
    </subcellularLocation>
    <subcellularLocation>
        <location evidence="1">Cytoplasm</location>
        <location evidence="1">Cytosol</location>
    </subcellularLocation>
    <text evidence="1">Shuttles between the cytoplasm and the nucleus. Associates with replicating mitochondria.</text>
</comment>
<comment type="alternative products">
    <event type="alternative splicing"/>
    <isoform>
        <id>Q00994-1</id>
        <name>1</name>
        <sequence type="displayed"/>
    </isoform>
    <isoform>
        <id>Q00994-2</id>
        <name>2</name>
        <sequence type="described" ref="VSP_046343"/>
    </isoform>
</comment>
<comment type="tissue specificity">
    <text evidence="3">Found in ovarian granulosa cells, testis, prostate and seminal vesicle tissue. High levels also detected in liver.</text>
</comment>
<comment type="domain">
    <text evidence="1">The nuclear export signal is required for export from the nucleus and the interactions with itself and NGFR/p75NTR.</text>
</comment>
<comment type="domain">
    <text evidence="1">The histidine cluster (His cluster) and Cys-108 mediate zinc-binding.</text>
</comment>
<comment type="PTM">
    <text evidence="1">Ubiquitinated. Degraded by the proteasome.</text>
</comment>
<comment type="similarity">
    <text evidence="5">Belongs to the BEX family.</text>
</comment>
<gene>
    <name evidence="6" type="primary">BEX3</name>
    <name type="synonym">DXS6984E</name>
    <name type="synonym">NADE</name>
    <name type="synonym">NGFRAP1</name>
</gene>
<organism>
    <name type="scientific">Homo sapiens</name>
    <name type="common">Human</name>
    <dbReference type="NCBI Taxonomy" id="9606"/>
    <lineage>
        <taxon>Eukaryota</taxon>
        <taxon>Metazoa</taxon>
        <taxon>Chordata</taxon>
        <taxon>Craniata</taxon>
        <taxon>Vertebrata</taxon>
        <taxon>Euteleostomi</taxon>
        <taxon>Mammalia</taxon>
        <taxon>Eutheria</taxon>
        <taxon>Euarchontoglires</taxon>
        <taxon>Primates</taxon>
        <taxon>Haplorrhini</taxon>
        <taxon>Catarrhini</taxon>
        <taxon>Hominidae</taxon>
        <taxon>Homo</taxon>
    </lineage>
</organism>
<dbReference type="EMBL" id="M38188">
    <property type="protein sequence ID" value="AAA63232.1"/>
    <property type="molecule type" value="mRNA"/>
</dbReference>
<dbReference type="EMBL" id="AF187064">
    <property type="protein sequence ID" value="AAF75129.1"/>
    <property type="molecule type" value="mRNA"/>
</dbReference>
<dbReference type="EMBL" id="AY833562">
    <property type="protein sequence ID" value="AAX40680.1"/>
    <property type="molecule type" value="mRNA"/>
</dbReference>
<dbReference type="EMBL" id="AK315371">
    <property type="protein sequence ID" value="BAG37764.1"/>
    <property type="molecule type" value="mRNA"/>
</dbReference>
<dbReference type="EMBL" id="EL953547">
    <property type="status" value="NOT_ANNOTATED_CDS"/>
    <property type="molecule type" value="Genomic_DNA"/>
</dbReference>
<dbReference type="EMBL" id="AL606763">
    <property type="status" value="NOT_ANNOTATED_CDS"/>
    <property type="molecule type" value="Genomic_DNA"/>
</dbReference>
<dbReference type="EMBL" id="CH471190">
    <property type="protein sequence ID" value="EAW54710.1"/>
    <property type="molecule type" value="Genomic_DNA"/>
</dbReference>
<dbReference type="EMBL" id="CH471190">
    <property type="protein sequence ID" value="EAW54712.1"/>
    <property type="molecule type" value="Genomic_DNA"/>
</dbReference>
<dbReference type="EMBL" id="BC003190">
    <property type="protein sequence ID" value="AAH03190.1"/>
    <property type="molecule type" value="mRNA"/>
</dbReference>
<dbReference type="CCDS" id="CCDS14508.1">
    <molecule id="Q00994-1"/>
</dbReference>
<dbReference type="CCDS" id="CCDS14509.1">
    <molecule id="Q00994-2"/>
</dbReference>
<dbReference type="PIR" id="C35826">
    <property type="entry name" value="C35826"/>
</dbReference>
<dbReference type="RefSeq" id="NP_055195.1">
    <molecule id="Q00994-1"/>
    <property type="nucleotide sequence ID" value="NM_014380.3"/>
</dbReference>
<dbReference type="RefSeq" id="NP_996798.1">
    <molecule id="Q00994-1"/>
    <property type="nucleotide sequence ID" value="NM_206915.3"/>
</dbReference>
<dbReference type="RefSeq" id="NP_996800.1">
    <molecule id="Q00994-2"/>
    <property type="nucleotide sequence ID" value="NM_206917.3"/>
</dbReference>
<dbReference type="SMR" id="Q00994"/>
<dbReference type="BioGRID" id="117956">
    <property type="interactions" value="37"/>
</dbReference>
<dbReference type="FunCoup" id="Q00994">
    <property type="interactions" value="363"/>
</dbReference>
<dbReference type="IntAct" id="Q00994">
    <property type="interactions" value="49"/>
</dbReference>
<dbReference type="MINT" id="Q00994"/>
<dbReference type="STRING" id="9606.ENSP00000361728"/>
<dbReference type="iPTMnet" id="Q00994"/>
<dbReference type="PhosphoSitePlus" id="Q00994"/>
<dbReference type="BioMuta" id="BEX3"/>
<dbReference type="DMDM" id="547642"/>
<dbReference type="jPOST" id="Q00994"/>
<dbReference type="MassIVE" id="Q00994"/>
<dbReference type="PaxDb" id="9606-ENSP00000361728"/>
<dbReference type="PeptideAtlas" id="Q00994"/>
<dbReference type="ProteomicsDB" id="57900">
    <molecule id="Q00994-1"/>
</dbReference>
<dbReference type="Antibodypedia" id="540">
    <property type="antibodies" value="262 antibodies from 37 providers"/>
</dbReference>
<dbReference type="DNASU" id="27018"/>
<dbReference type="Ensembl" id="ENST00000361298.9">
    <molecule id="Q00994-2"/>
    <property type="protein sequence ID" value="ENSP00000354843.4"/>
    <property type="gene ID" value="ENSG00000166681.14"/>
</dbReference>
<dbReference type="Ensembl" id="ENST00000372634.1">
    <molecule id="Q00994-2"/>
    <property type="protein sequence ID" value="ENSP00000361717.1"/>
    <property type="gene ID" value="ENSG00000166681.14"/>
</dbReference>
<dbReference type="Ensembl" id="ENST00000372635.1">
    <molecule id="Q00994-1"/>
    <property type="protein sequence ID" value="ENSP00000361718.1"/>
    <property type="gene ID" value="ENSG00000166681.14"/>
</dbReference>
<dbReference type="Ensembl" id="ENST00000372645.3">
    <molecule id="Q00994-1"/>
    <property type="protein sequence ID" value="ENSP00000361728.3"/>
    <property type="gene ID" value="ENSG00000166681.14"/>
</dbReference>
<dbReference type="GeneID" id="27018"/>
<dbReference type="KEGG" id="hsa:27018"/>
<dbReference type="MANE-Select" id="ENST00000361298.9">
    <molecule id="Q00994-2"/>
    <property type="protein sequence ID" value="ENSP00000354843.4"/>
    <property type="RefSeq nucleotide sequence ID" value="NM_206917.3"/>
    <property type="RefSeq protein sequence ID" value="NP_996800.1"/>
</dbReference>
<dbReference type="UCSC" id="uc004ekh.5">
    <molecule id="Q00994-1"/>
    <property type="organism name" value="human"/>
</dbReference>
<dbReference type="AGR" id="HGNC:13388"/>
<dbReference type="CTD" id="27018"/>
<dbReference type="DisGeNET" id="27018"/>
<dbReference type="GeneCards" id="BEX3"/>
<dbReference type="HGNC" id="HGNC:13388">
    <property type="gene designation" value="BEX3"/>
</dbReference>
<dbReference type="HPA" id="ENSG00000166681">
    <property type="expression patterns" value="Tissue enhanced (choroid)"/>
</dbReference>
<dbReference type="MIM" id="300361">
    <property type="type" value="gene"/>
</dbReference>
<dbReference type="neXtProt" id="NX_Q00994"/>
<dbReference type="OpenTargets" id="ENSG00000166681"/>
<dbReference type="PharmGKB" id="PA31616"/>
<dbReference type="VEuPathDB" id="HostDB:ENSG00000166681"/>
<dbReference type="eggNOG" id="ENOG502TF4N">
    <property type="taxonomic scope" value="Eukaryota"/>
</dbReference>
<dbReference type="GeneTree" id="ENSGT00940000153412"/>
<dbReference type="HOGENOM" id="CLU_123122_0_0_1"/>
<dbReference type="InParanoid" id="Q00994"/>
<dbReference type="OMA" id="EMEQHMQ"/>
<dbReference type="OrthoDB" id="9833790at2759"/>
<dbReference type="PAN-GO" id="Q00994">
    <property type="GO annotations" value="4 GO annotations based on evolutionary models"/>
</dbReference>
<dbReference type="PhylomeDB" id="Q00994"/>
<dbReference type="TreeFam" id="TF337909"/>
<dbReference type="PathwayCommons" id="Q00994"/>
<dbReference type="Reactome" id="R-HSA-205025">
    <property type="pathway name" value="NADE modulates death signalling"/>
</dbReference>
<dbReference type="SignaLink" id="Q00994"/>
<dbReference type="BioGRID-ORCS" id="27018">
    <property type="hits" value="13 hits in 733 CRISPR screens"/>
</dbReference>
<dbReference type="CD-CODE" id="D8E9712B">
    <property type="entry name" value="Neuronal RNP granule"/>
</dbReference>
<dbReference type="ChiTaRS" id="BEX3">
    <property type="organism name" value="human"/>
</dbReference>
<dbReference type="GeneWiki" id="NGFRAP1"/>
<dbReference type="GenomeRNAi" id="27018"/>
<dbReference type="Pharos" id="Q00994">
    <property type="development level" value="Tbio"/>
</dbReference>
<dbReference type="PRO" id="PR:Q00994"/>
<dbReference type="Proteomes" id="UP000005640">
    <property type="component" value="Chromosome X"/>
</dbReference>
<dbReference type="RNAct" id="Q00994">
    <property type="molecule type" value="protein"/>
</dbReference>
<dbReference type="Bgee" id="ENSG00000166681">
    <property type="expression patterns" value="Expressed in cerebellar vermis and 211 other cell types or tissues"/>
</dbReference>
<dbReference type="GO" id="GO:0005737">
    <property type="term" value="C:cytoplasm"/>
    <property type="evidence" value="ECO:0000318"/>
    <property type="project" value="GO_Central"/>
</dbReference>
<dbReference type="GO" id="GO:0005829">
    <property type="term" value="C:cytosol"/>
    <property type="evidence" value="ECO:0000314"/>
    <property type="project" value="HPA"/>
</dbReference>
<dbReference type="GO" id="GO:0005634">
    <property type="term" value="C:nucleus"/>
    <property type="evidence" value="ECO:0007669"/>
    <property type="project" value="UniProtKB-SubCell"/>
</dbReference>
<dbReference type="GO" id="GO:0008656">
    <property type="term" value="F:cysteine-type endopeptidase activator activity involved in apoptotic process"/>
    <property type="evidence" value="ECO:0000304"/>
    <property type="project" value="Reactome"/>
</dbReference>
<dbReference type="GO" id="GO:0042802">
    <property type="term" value="F:identical protein binding"/>
    <property type="evidence" value="ECO:0000353"/>
    <property type="project" value="IntAct"/>
</dbReference>
<dbReference type="GO" id="GO:0046872">
    <property type="term" value="F:metal ion binding"/>
    <property type="evidence" value="ECO:0007669"/>
    <property type="project" value="UniProtKB-KW"/>
</dbReference>
<dbReference type="GO" id="GO:0140678">
    <property type="term" value="F:molecular function inhibitor activity"/>
    <property type="evidence" value="ECO:0000250"/>
    <property type="project" value="UniProtKB"/>
</dbReference>
<dbReference type="GO" id="GO:0005163">
    <property type="term" value="F:nerve growth factor receptor binding"/>
    <property type="evidence" value="ECO:0007669"/>
    <property type="project" value="Ensembl"/>
</dbReference>
<dbReference type="GO" id="GO:0005102">
    <property type="term" value="F:signaling receptor binding"/>
    <property type="evidence" value="ECO:0000318"/>
    <property type="project" value="GO_Central"/>
</dbReference>
<dbReference type="GO" id="GO:0008625">
    <property type="term" value="P:extrinsic apoptotic signaling pathway via death domain receptors"/>
    <property type="evidence" value="ECO:0007669"/>
    <property type="project" value="Ensembl"/>
</dbReference>
<dbReference type="GO" id="GO:0031397">
    <property type="term" value="P:negative regulation of protein ubiquitination"/>
    <property type="evidence" value="ECO:0000250"/>
    <property type="project" value="UniProtKB"/>
</dbReference>
<dbReference type="GO" id="GO:0007165">
    <property type="term" value="P:signal transduction"/>
    <property type="evidence" value="ECO:0000318"/>
    <property type="project" value="GO_Central"/>
</dbReference>
<dbReference type="InterPro" id="IPR007623">
    <property type="entry name" value="BEX"/>
</dbReference>
<dbReference type="InterPro" id="IPR021156">
    <property type="entry name" value="TF_A-like/BEX"/>
</dbReference>
<dbReference type="PANTHER" id="PTHR19430">
    <property type="entry name" value="PROTEIN BEX1-RELATED"/>
    <property type="match status" value="1"/>
</dbReference>
<dbReference type="PANTHER" id="PTHR19430:SF1">
    <property type="entry name" value="PROTEIN BEX3"/>
    <property type="match status" value="1"/>
</dbReference>
<dbReference type="Pfam" id="PF04538">
    <property type="entry name" value="BEX"/>
    <property type="match status" value="1"/>
</dbReference>
<dbReference type="PIRSF" id="PIRSF008633">
    <property type="entry name" value="BEX"/>
    <property type="match status" value="1"/>
</dbReference>
<accession>Q00994</accession>
<accession>B2RD17</accession>
<accession>D3DXA3</accession>
<accession>Q5JQT4</accession>
<accession>Q5JQT5</accession>
<name>BEX3_HUMAN</name>
<protein>
    <recommendedName>
        <fullName evidence="5">Protein BEX3</fullName>
    </recommendedName>
    <alternativeName>
        <fullName evidence="6">Brain-expressed X-linked protein 3</fullName>
    </alternativeName>
    <alternativeName>
        <fullName>Nerve growth factor receptor-associated protein 1</fullName>
    </alternativeName>
    <alternativeName>
        <fullName>Ovarian granulosa cell 13.0 kDa protein HGR74</fullName>
    </alternativeName>
    <alternativeName>
        <fullName>p75NTR-associated cell death executor</fullName>
    </alternativeName>
</protein>
<evidence type="ECO:0000250" key="1">
    <source>
        <dbReference type="UniProtKB" id="Q9WTZ9"/>
    </source>
</evidence>
<evidence type="ECO:0000256" key="2">
    <source>
        <dbReference type="SAM" id="MobiDB-lite"/>
    </source>
</evidence>
<evidence type="ECO:0000269" key="3">
    <source>
    </source>
</evidence>
<evidence type="ECO:0000303" key="4">
    <source ref="5"/>
</evidence>
<evidence type="ECO:0000305" key="5"/>
<evidence type="ECO:0000312" key="6">
    <source>
        <dbReference type="HGNC" id="HGNC:13388"/>
    </source>
</evidence>